<dbReference type="EMBL" id="BC110274">
    <property type="protein sequence ID" value="AAI10275.1"/>
    <property type="molecule type" value="mRNA"/>
</dbReference>
<dbReference type="RefSeq" id="NP_001069858.1">
    <property type="nucleotide sequence ID" value="NM_001076390.1"/>
</dbReference>
<dbReference type="RefSeq" id="XP_005221326.1">
    <property type="nucleotide sequence ID" value="XM_005221269.5"/>
</dbReference>
<dbReference type="RefSeq" id="XP_024836200.1">
    <property type="nucleotide sequence ID" value="XM_024980432.2"/>
</dbReference>
<dbReference type="SMR" id="Q2YDD4"/>
<dbReference type="FunCoup" id="Q2YDD4">
    <property type="interactions" value="659"/>
</dbReference>
<dbReference type="STRING" id="9913.ENSBTAP00000025078"/>
<dbReference type="PaxDb" id="9913-ENSBTAP00000025078"/>
<dbReference type="Ensembl" id="ENSBTAT00000025078.6">
    <property type="protein sequence ID" value="ENSBTAP00000025078.5"/>
    <property type="gene ID" value="ENSBTAG00000018837.7"/>
</dbReference>
<dbReference type="GeneID" id="615681"/>
<dbReference type="KEGG" id="bta:615681"/>
<dbReference type="CTD" id="201266"/>
<dbReference type="VEuPathDB" id="HostDB:ENSBTAG00000018837"/>
<dbReference type="VGNC" id="VGNC:34859">
    <property type="gene designation" value="SLC39A11"/>
</dbReference>
<dbReference type="eggNOG" id="KOG2474">
    <property type="taxonomic scope" value="Eukaryota"/>
</dbReference>
<dbReference type="GeneTree" id="ENSGT00390000006167"/>
<dbReference type="HOGENOM" id="CLU_015114_1_1_1"/>
<dbReference type="InParanoid" id="Q2YDD4"/>
<dbReference type="OMA" id="MIFVVIE"/>
<dbReference type="TreeFam" id="TF105905"/>
<dbReference type="Proteomes" id="UP000009136">
    <property type="component" value="Chromosome 19"/>
</dbReference>
<dbReference type="Bgee" id="ENSBTAG00000018837">
    <property type="expression patterns" value="Expressed in saliva-secreting gland and 104 other cell types or tissues"/>
</dbReference>
<dbReference type="GO" id="GO:0005737">
    <property type="term" value="C:cytoplasm"/>
    <property type="evidence" value="ECO:0000250"/>
    <property type="project" value="UniProtKB"/>
</dbReference>
<dbReference type="GO" id="GO:0005794">
    <property type="term" value="C:Golgi apparatus"/>
    <property type="evidence" value="ECO:0000250"/>
    <property type="project" value="UniProtKB"/>
</dbReference>
<dbReference type="GO" id="GO:0016020">
    <property type="term" value="C:membrane"/>
    <property type="evidence" value="ECO:0000318"/>
    <property type="project" value="GO_Central"/>
</dbReference>
<dbReference type="GO" id="GO:0005634">
    <property type="term" value="C:nucleus"/>
    <property type="evidence" value="ECO:0000250"/>
    <property type="project" value="UniProtKB"/>
</dbReference>
<dbReference type="GO" id="GO:0005886">
    <property type="term" value="C:plasma membrane"/>
    <property type="evidence" value="ECO:0000250"/>
    <property type="project" value="UniProtKB"/>
</dbReference>
<dbReference type="GO" id="GO:0005375">
    <property type="term" value="F:copper ion transmembrane transporter activity"/>
    <property type="evidence" value="ECO:0000250"/>
    <property type="project" value="UniProtKB"/>
</dbReference>
<dbReference type="GO" id="GO:0005385">
    <property type="term" value="F:zinc ion transmembrane transporter activity"/>
    <property type="evidence" value="ECO:0000250"/>
    <property type="project" value="UniProtKB"/>
</dbReference>
<dbReference type="GO" id="GO:0071577">
    <property type="term" value="P:zinc ion transmembrane transport"/>
    <property type="evidence" value="ECO:0000318"/>
    <property type="project" value="GO_Central"/>
</dbReference>
<dbReference type="InterPro" id="IPR003689">
    <property type="entry name" value="ZIP"/>
</dbReference>
<dbReference type="PANTHER" id="PTHR11040:SF211">
    <property type="entry name" value="ZINC TRANSPORTER ZIP11"/>
    <property type="match status" value="1"/>
</dbReference>
<dbReference type="PANTHER" id="PTHR11040">
    <property type="entry name" value="ZINC/IRON TRANSPORTER"/>
    <property type="match status" value="1"/>
</dbReference>
<dbReference type="Pfam" id="PF02535">
    <property type="entry name" value="Zip"/>
    <property type="match status" value="1"/>
</dbReference>
<name>S39AB_BOVIN</name>
<organism>
    <name type="scientific">Bos taurus</name>
    <name type="common">Bovine</name>
    <dbReference type="NCBI Taxonomy" id="9913"/>
    <lineage>
        <taxon>Eukaryota</taxon>
        <taxon>Metazoa</taxon>
        <taxon>Chordata</taxon>
        <taxon>Craniata</taxon>
        <taxon>Vertebrata</taxon>
        <taxon>Euteleostomi</taxon>
        <taxon>Mammalia</taxon>
        <taxon>Eutheria</taxon>
        <taxon>Laurasiatheria</taxon>
        <taxon>Artiodactyla</taxon>
        <taxon>Ruminantia</taxon>
        <taxon>Pecora</taxon>
        <taxon>Bovidae</taxon>
        <taxon>Bovinae</taxon>
        <taxon>Bos</taxon>
    </lineage>
</organism>
<feature type="chain" id="PRO_0000308409" description="Zinc transporter ZIP11">
    <location>
        <begin position="1"/>
        <end position="341"/>
    </location>
</feature>
<feature type="transmembrane region" description="Helical" evidence="2">
    <location>
        <begin position="12"/>
        <end position="32"/>
    </location>
</feature>
<feature type="transmembrane region" description="Helical" evidence="2">
    <location>
        <begin position="44"/>
        <end position="64"/>
    </location>
</feature>
<feature type="transmembrane region" description="Helical" evidence="2">
    <location>
        <begin position="72"/>
        <end position="92"/>
    </location>
</feature>
<feature type="transmembrane region" description="Helical" evidence="2">
    <location>
        <begin position="193"/>
        <end position="213"/>
    </location>
</feature>
<feature type="transmembrane region" description="Helical" evidence="2">
    <location>
        <begin position="262"/>
        <end position="284"/>
    </location>
</feature>
<feature type="transmembrane region" description="Helical" evidence="2">
    <location>
        <begin position="289"/>
        <end position="306"/>
    </location>
</feature>
<feature type="transmembrane region" description="Helical" evidence="2">
    <location>
        <begin position="321"/>
        <end position="341"/>
    </location>
</feature>
<proteinExistence type="evidence at transcript level"/>
<accession>Q2YDD4</accession>
<keyword id="KW-1003">Cell membrane</keyword>
<keyword id="KW-0963">Cytoplasm</keyword>
<keyword id="KW-0333">Golgi apparatus</keyword>
<keyword id="KW-0406">Ion transport</keyword>
<keyword id="KW-0472">Membrane</keyword>
<keyword id="KW-0539">Nucleus</keyword>
<keyword id="KW-1185">Reference proteome</keyword>
<keyword id="KW-0812">Transmembrane</keyword>
<keyword id="KW-1133">Transmembrane helix</keyword>
<keyword id="KW-0813">Transport</keyword>
<keyword id="KW-0862">Zinc</keyword>
<keyword id="KW-0864">Zinc transport</keyword>
<evidence type="ECO:0000250" key="1">
    <source>
        <dbReference type="UniProtKB" id="Q8BWY7"/>
    </source>
</evidence>
<evidence type="ECO:0000255" key="2"/>
<evidence type="ECO:0000305" key="3"/>
<reference key="1">
    <citation type="submission" date="2005-11" db="EMBL/GenBank/DDBJ databases">
        <authorList>
            <consortium name="NIH - Mammalian Gene Collection (MGC) project"/>
        </authorList>
    </citation>
    <scope>NUCLEOTIDE SEQUENCE [LARGE SCALE MRNA]</scope>
    <source>
        <strain>Crossbred X Angus</strain>
        <tissue>Liver</tissue>
    </source>
</reference>
<protein>
    <recommendedName>
        <fullName>Zinc transporter ZIP11</fullName>
    </recommendedName>
    <alternativeName>
        <fullName>Solute carrier family 39 member 11</fullName>
    </alternativeName>
    <alternativeName>
        <fullName>Zrt- and Irt-like protein 11</fullName>
        <shortName>ZIP-11</shortName>
    </alternativeName>
</protein>
<comment type="function">
    <text evidence="1">Zinc importer that regulates cytosolic zinc concentrations either via zinc influx from the extracellular compartment or efflux from intracellular organelles such as Golgi apparatus. May transport copper ions as well. The transport mechanism remains to be elucidated.</text>
</comment>
<comment type="catalytic activity">
    <reaction evidence="1">
        <text>Zn(2+)(in) = Zn(2+)(out)</text>
        <dbReference type="Rhea" id="RHEA:29351"/>
        <dbReference type="ChEBI" id="CHEBI:29105"/>
    </reaction>
    <physiologicalReaction direction="right-to-left" evidence="1">
        <dbReference type="Rhea" id="RHEA:29353"/>
    </physiologicalReaction>
</comment>
<comment type="catalytic activity">
    <reaction evidence="1">
        <text>Cu(2+)(in) = Cu(2+)(out)</text>
        <dbReference type="Rhea" id="RHEA:28703"/>
        <dbReference type="ChEBI" id="CHEBI:29036"/>
    </reaction>
    <physiologicalReaction direction="right-to-left" evidence="1">
        <dbReference type="Rhea" id="RHEA:28705"/>
    </physiologicalReaction>
</comment>
<comment type="subcellular location">
    <subcellularLocation>
        <location evidence="1">Cell membrane</location>
        <topology evidence="3">Multi-pass membrane protein</topology>
    </subcellularLocation>
    <subcellularLocation>
        <location evidence="1">Nucleus</location>
    </subcellularLocation>
    <subcellularLocation>
        <location evidence="1">Cytoplasm</location>
    </subcellularLocation>
    <subcellularLocation>
        <location evidence="1">Golgi apparatus</location>
    </subcellularLocation>
</comment>
<comment type="similarity">
    <text evidence="3">Belongs to the ZIP transporter (TC 2.A.5) family.</text>
</comment>
<gene>
    <name type="primary">SLC39A11</name>
    <name type="synonym">ZIP11</name>
</gene>
<sequence>MLHGHSPVSQALLGTFFTWGLTAAGAALVFVFSSGQRRILDGSLGFAAGVMLAASYWSLLAPAVEMAMSSGGFGSLAFLPVAIGFTLGAAFVYVADLLMPHWGAAEDPQTALALNLDPLLTKKSDAEGARMLFPESELSIRIGRAGLLSDKSENGEAYQRKRAVATDLAEGPAAPGPPRGSAAQPGGSSWRRIALLILAITIHNIPEGLAVGVGFGAVGKTASATFESARNLALGIGIQNFPEGLAVSLPLRGAGFSTWRAFWYGQLSGMVEPLAGVFGAFAVVLAEPILPYALAFAAGAMVYVIMDDIIPEAQISGNGKLASWASILGFVVMMSLDVGLG</sequence>